<name>SGCX_SALTI</name>
<reference key="1">
    <citation type="journal article" date="2001" name="Nature">
        <title>Complete genome sequence of a multiple drug resistant Salmonella enterica serovar Typhi CT18.</title>
        <authorList>
            <person name="Parkhill J."/>
            <person name="Dougan G."/>
            <person name="James K.D."/>
            <person name="Thomson N.R."/>
            <person name="Pickard D."/>
            <person name="Wain J."/>
            <person name="Churcher C.M."/>
            <person name="Mungall K.L."/>
            <person name="Bentley S.D."/>
            <person name="Holden M.T.G."/>
            <person name="Sebaihia M."/>
            <person name="Baker S."/>
            <person name="Basham D."/>
            <person name="Brooks K."/>
            <person name="Chillingworth T."/>
            <person name="Connerton P."/>
            <person name="Cronin A."/>
            <person name="Davis P."/>
            <person name="Davies R.M."/>
            <person name="Dowd L."/>
            <person name="White N."/>
            <person name="Farrar J."/>
            <person name="Feltwell T."/>
            <person name="Hamlin N."/>
            <person name="Haque A."/>
            <person name="Hien T.T."/>
            <person name="Holroyd S."/>
            <person name="Jagels K."/>
            <person name="Krogh A."/>
            <person name="Larsen T.S."/>
            <person name="Leather S."/>
            <person name="Moule S."/>
            <person name="O'Gaora P."/>
            <person name="Parry C."/>
            <person name="Quail M.A."/>
            <person name="Rutherford K.M."/>
            <person name="Simmonds M."/>
            <person name="Skelton J."/>
            <person name="Stevens K."/>
            <person name="Whitehead S."/>
            <person name="Barrell B.G."/>
        </authorList>
    </citation>
    <scope>NUCLEOTIDE SEQUENCE [LARGE SCALE GENOMIC DNA]</scope>
    <source>
        <strain>CT18</strain>
    </source>
</reference>
<reference key="2">
    <citation type="journal article" date="2003" name="J. Bacteriol.">
        <title>Comparative genomics of Salmonella enterica serovar Typhi strains Ty2 and CT18.</title>
        <authorList>
            <person name="Deng W."/>
            <person name="Liou S.-R."/>
            <person name="Plunkett G. III"/>
            <person name="Mayhew G.F."/>
            <person name="Rose D.J."/>
            <person name="Burland V."/>
            <person name="Kodoyianni V."/>
            <person name="Schwartz D.C."/>
            <person name="Blattner F.R."/>
        </authorList>
    </citation>
    <scope>NUCLEOTIDE SEQUENCE [LARGE SCALE GENOMIC DNA]</scope>
    <source>
        <strain>ATCC 700931 / Ty2</strain>
    </source>
</reference>
<proteinExistence type="inferred from homology"/>
<keyword id="KW-0031">Aminopeptidase</keyword>
<keyword id="KW-0378">Hydrolase</keyword>
<keyword id="KW-0479">Metal-binding</keyword>
<keyword id="KW-0482">Metalloprotease</keyword>
<keyword id="KW-0645">Protease</keyword>
<sequence length="372" mass="40341">MTFSVQETLFSLLRLNGISGHESSIANVMQHAFEQQAKDVWRDRLGNVVARYGSDKSDALRLMIFAHMDEVGFMVRKIEPSGFLRFERVGGPAQITMPGSIVTLAGCSGDIMGCIGIKAYHFAKGDERTQPPALDKLWIDIGAKDKADAERMGIQVGTPVTLYNPPHCLGNDLVCSKALDDRLGCTALLGVAEALASTPLDIAVFLVASVQEEFNIRGIVPVLRRVRPDLAIGIDITPSCDTPDLQDYSDVRVNHGVGITCLNYHGRGTLAGLITPPRLLRMLETTAHENNIPVQREVAPGVITETGYIQVELDGIPCASLSIPCRYTHSPAEVASLRDLADCIRLLTALANMSPEQFPIDPETGATQEARP</sequence>
<dbReference type="EC" id="3.4.11.-"/>
<dbReference type="EMBL" id="AL513382">
    <property type="protein sequence ID" value="CAD01713.1"/>
    <property type="molecule type" value="Genomic_DNA"/>
</dbReference>
<dbReference type="EMBL" id="AE014613">
    <property type="protein sequence ID" value="AAO69156.1"/>
    <property type="molecule type" value="Genomic_DNA"/>
</dbReference>
<dbReference type="RefSeq" id="NP_455885.1">
    <property type="nucleotide sequence ID" value="NC_003198.1"/>
</dbReference>
<dbReference type="RefSeq" id="WP_000144622.1">
    <property type="nucleotide sequence ID" value="NZ_WSUR01000020.1"/>
</dbReference>
<dbReference type="SMR" id="P58536"/>
<dbReference type="STRING" id="220341.gene:17585403"/>
<dbReference type="MEROPS" id="M42.A01"/>
<dbReference type="KEGG" id="stt:t1521"/>
<dbReference type="KEGG" id="sty:STY1452"/>
<dbReference type="PATRIC" id="fig|220341.7.peg.1462"/>
<dbReference type="eggNOG" id="COG1363">
    <property type="taxonomic scope" value="Bacteria"/>
</dbReference>
<dbReference type="HOGENOM" id="CLU_047249_0_1_6"/>
<dbReference type="OMA" id="WQDLYID"/>
<dbReference type="OrthoDB" id="9772053at2"/>
<dbReference type="Proteomes" id="UP000000541">
    <property type="component" value="Chromosome"/>
</dbReference>
<dbReference type="Proteomes" id="UP000002670">
    <property type="component" value="Chromosome"/>
</dbReference>
<dbReference type="GO" id="GO:0004177">
    <property type="term" value="F:aminopeptidase activity"/>
    <property type="evidence" value="ECO:0007669"/>
    <property type="project" value="UniProtKB-KW"/>
</dbReference>
<dbReference type="GO" id="GO:0046872">
    <property type="term" value="F:metal ion binding"/>
    <property type="evidence" value="ECO:0007669"/>
    <property type="project" value="UniProtKB-KW"/>
</dbReference>
<dbReference type="GO" id="GO:0008237">
    <property type="term" value="F:metallopeptidase activity"/>
    <property type="evidence" value="ECO:0007669"/>
    <property type="project" value="UniProtKB-KW"/>
</dbReference>
<dbReference type="GO" id="GO:0006508">
    <property type="term" value="P:proteolysis"/>
    <property type="evidence" value="ECO:0007669"/>
    <property type="project" value="UniProtKB-KW"/>
</dbReference>
<dbReference type="CDD" id="cd05656">
    <property type="entry name" value="M42_Frv"/>
    <property type="match status" value="1"/>
</dbReference>
<dbReference type="Gene3D" id="2.40.30.40">
    <property type="entry name" value="Peptidase M42, domain 2"/>
    <property type="match status" value="1"/>
</dbReference>
<dbReference type="Gene3D" id="3.40.630.10">
    <property type="entry name" value="Zn peptidases"/>
    <property type="match status" value="1"/>
</dbReference>
<dbReference type="InterPro" id="IPR008007">
    <property type="entry name" value="Peptidase_M42"/>
</dbReference>
<dbReference type="InterPro" id="IPR051464">
    <property type="entry name" value="Peptidase_M42_aminopept"/>
</dbReference>
<dbReference type="InterPro" id="IPR023367">
    <property type="entry name" value="Peptidase_M42_dom2"/>
</dbReference>
<dbReference type="PANTHER" id="PTHR32481">
    <property type="entry name" value="AMINOPEPTIDASE"/>
    <property type="match status" value="1"/>
</dbReference>
<dbReference type="PANTHER" id="PTHR32481:SF12">
    <property type="entry name" value="AMINOPEPTIDASE SGCX-RELATED"/>
    <property type="match status" value="1"/>
</dbReference>
<dbReference type="Pfam" id="PF05343">
    <property type="entry name" value="Peptidase_M42"/>
    <property type="match status" value="1"/>
</dbReference>
<dbReference type="PIRSF" id="PIRSF001123">
    <property type="entry name" value="PepA_GA"/>
    <property type="match status" value="1"/>
</dbReference>
<dbReference type="SUPFAM" id="SSF101821">
    <property type="entry name" value="Aminopeptidase/glucanase lid domain"/>
    <property type="match status" value="1"/>
</dbReference>
<dbReference type="SUPFAM" id="SSF53187">
    <property type="entry name" value="Zn-dependent exopeptidases"/>
    <property type="match status" value="1"/>
</dbReference>
<evidence type="ECO:0000250" key="1"/>
<evidence type="ECO:0000305" key="2"/>
<accession>P58536</accession>
<comment type="cofactor">
    <cofactor evidence="1">
        <name>a divalent metal cation</name>
        <dbReference type="ChEBI" id="CHEBI:60240"/>
    </cofactor>
    <text evidence="1">Binds 2 divalent metal cations per subunit.</text>
</comment>
<comment type="similarity">
    <text evidence="2">Belongs to the peptidase M42 family.</text>
</comment>
<organism>
    <name type="scientific">Salmonella typhi</name>
    <dbReference type="NCBI Taxonomy" id="90370"/>
    <lineage>
        <taxon>Bacteria</taxon>
        <taxon>Pseudomonadati</taxon>
        <taxon>Pseudomonadota</taxon>
        <taxon>Gammaproteobacteria</taxon>
        <taxon>Enterobacterales</taxon>
        <taxon>Enterobacteriaceae</taxon>
        <taxon>Salmonella</taxon>
    </lineage>
</organism>
<gene>
    <name type="primary">sgcX</name>
    <name type="ordered locus">STY1452</name>
    <name type="ordered locus">t1521</name>
</gene>
<protein>
    <recommendedName>
        <fullName>Putative aminopeptidase SgcX</fullName>
        <ecNumber>3.4.11.-</ecNumber>
    </recommendedName>
</protein>
<feature type="chain" id="PRO_0000071657" description="Putative aminopeptidase SgcX">
    <location>
        <begin position="1"/>
        <end position="372"/>
    </location>
</feature>
<feature type="active site" description="Proton acceptor" evidence="1">
    <location>
        <position position="212"/>
    </location>
</feature>
<feature type="binding site" evidence="1">
    <location>
        <position position="67"/>
    </location>
    <ligand>
        <name>a divalent metal cation</name>
        <dbReference type="ChEBI" id="CHEBI:60240"/>
        <label>1</label>
    </ligand>
</feature>
<feature type="binding site" evidence="1">
    <location>
        <position position="180"/>
    </location>
    <ligand>
        <name>a divalent metal cation</name>
        <dbReference type="ChEBI" id="CHEBI:60240"/>
        <label>1</label>
    </ligand>
</feature>
<feature type="binding site" evidence="1">
    <location>
        <position position="180"/>
    </location>
    <ligand>
        <name>a divalent metal cation</name>
        <dbReference type="ChEBI" id="CHEBI:60240"/>
        <label>2</label>
    </ligand>
</feature>
<feature type="binding site" evidence="1">
    <location>
        <position position="213"/>
    </location>
    <ligand>
        <name>a divalent metal cation</name>
        <dbReference type="ChEBI" id="CHEBI:60240"/>
        <label>2</label>
    </ligand>
</feature>
<feature type="binding site" evidence="1">
    <location>
        <position position="235"/>
    </location>
    <ligand>
        <name>a divalent metal cation</name>
        <dbReference type="ChEBI" id="CHEBI:60240"/>
        <label>1</label>
    </ligand>
</feature>
<feature type="binding site" evidence="1">
    <location>
        <position position="329"/>
    </location>
    <ligand>
        <name>a divalent metal cation</name>
        <dbReference type="ChEBI" id="CHEBI:60240"/>
        <label>2</label>
    </ligand>
</feature>